<gene>
    <name evidence="3" type="primary">bglapBGP</name>
    <name evidence="12" type="synonym">BGP</name>
</gene>
<comment type="function">
    <text evidence="2">The carboxylated form is one of the main organic components of the bone matrix, which constitutes 1-2% of the total bone protein (By similarity). The carboxylated form binds strongly to apatite and calcium (By similarity).</text>
</comment>
<comment type="subcellular location">
    <subcellularLocation>
        <location evidence="7">Secreted</location>
    </subcellularLocation>
</comment>
<comment type="developmental stage">
    <text evidence="6">Detected in cleithrum from 8 days post fertilization (DPF) onwards and in basioccipital articulatory process, vertebrae and hypurals from 16, 15 and 22 DPF, respectively.</text>
</comment>
<comment type="PTM">
    <text evidence="5">Gamma-carboxyglutamate residues are formed by vitamin K dependent carboxylation by GGCX. These residues are essential for the binding of calcium.</text>
</comment>
<comment type="similarity">
    <text evidence="10">Belongs to the osteocalcin/matrix Gla protein family.</text>
</comment>
<comment type="sequence caution" evidence="10">
    <conflict type="miscellaneous discrepancy">
        <sequence resource="EMBL-CDS" id="AAW30003"/>
    </conflict>
</comment>
<protein>
    <recommendedName>
        <fullName evidence="8">Osteocalcin 1</fullName>
        <shortName evidence="8">SseOC1</shortName>
    </recommendedName>
    <alternativeName>
        <fullName evidence="12">Bone Gla protein</fullName>
        <shortName evidence="3">BGL</shortName>
    </alternativeName>
    <alternativeName>
        <fullName evidence="3">Gamma-carboxyglutamic acid-containing protein</fullName>
    </alternativeName>
</protein>
<proteinExistence type="evidence at protein level"/>
<name>OSTC1_SOLSE</name>
<keyword id="KW-0091">Biomineralization</keyword>
<keyword id="KW-0106">Calcium</keyword>
<keyword id="KW-0903">Direct protein sequencing</keyword>
<keyword id="KW-1015">Disulfide bond</keyword>
<keyword id="KW-0301">Gamma-carboxyglutamic acid</keyword>
<keyword id="KW-0372">Hormone</keyword>
<keyword id="KW-0479">Metal-binding</keyword>
<keyword id="KW-0964">Secreted</keyword>
<keyword id="KW-0732">Signal</keyword>
<reference evidence="10" key="1">
    <citation type="journal article" date="2006" name="Gene Expr. Patterns">
        <title>Osteocalcin and matrix Gla protein in zebrafish (Danio rerio) and Senegal sole (Solea senegalensis): comparative gene and protein expression during larval development through adulthood.</title>
        <authorList>
            <person name="Gavaia P.J."/>
            <person name="Simes D.C."/>
            <person name="Ortiz-Delgado J.B."/>
            <person name="Viegas C.S."/>
            <person name="Pinto J.P."/>
            <person name="Kelsh R.N."/>
            <person name="Sarasquete M.C."/>
            <person name="Cancela M.L."/>
        </authorList>
    </citation>
    <scope>NUCLEOTIDE SEQUENCE [MRNA]</scope>
    <scope>DEVELOPMENTAL STAGE</scope>
    <source>
        <tissue evidence="8">Bone</tissue>
    </source>
</reference>
<reference evidence="10" key="2">
    <citation type="journal article" date="2014" name="Fish Physiol. Biochem.">
        <title>Teleost fish osteocalcin 1 and 2 share the ability to bind the calcium mineral phase.</title>
        <authorList>
            <person name="Cavaco S."/>
            <person name="Williamson M.K."/>
            <person name="Rosa J."/>
            <person name="Roberto V."/>
            <person name="Cordeiro O."/>
            <person name="Price P.A."/>
            <person name="Leonor Cancela M."/>
            <person name="Laize V."/>
            <person name="Simes D.C."/>
        </authorList>
    </citation>
    <scope>PROTEIN SEQUENCE OF 51-75</scope>
    <scope>SUBCELLULAR LOCATION</scope>
    <source>
        <tissue evidence="9">Bone</tissue>
    </source>
</reference>
<organism evidence="12">
    <name type="scientific">Solea senegalensis</name>
    <name type="common">Senegalese sole</name>
    <dbReference type="NCBI Taxonomy" id="28829"/>
    <lineage>
        <taxon>Eukaryota</taxon>
        <taxon>Metazoa</taxon>
        <taxon>Chordata</taxon>
        <taxon>Craniata</taxon>
        <taxon>Vertebrata</taxon>
        <taxon>Euteleostomi</taxon>
        <taxon>Actinopterygii</taxon>
        <taxon>Neopterygii</taxon>
        <taxon>Teleostei</taxon>
        <taxon>Neoteleostei</taxon>
        <taxon>Acanthomorphata</taxon>
        <taxon>Carangaria</taxon>
        <taxon>Pleuronectiformes</taxon>
        <taxon>Pleuronectoidei</taxon>
        <taxon>Soleidae</taxon>
        <taxon>Solea</taxon>
    </lineage>
</organism>
<dbReference type="EMBL" id="AY823525">
    <property type="protein sequence ID" value="AAW30003.1"/>
    <property type="status" value="ALT_SEQ"/>
    <property type="molecule type" value="mRNA"/>
</dbReference>
<dbReference type="SMR" id="Q1EG28"/>
<dbReference type="GO" id="GO:0005576">
    <property type="term" value="C:extracellular region"/>
    <property type="evidence" value="ECO:0007669"/>
    <property type="project" value="UniProtKB-SubCell"/>
</dbReference>
<dbReference type="GO" id="GO:0005509">
    <property type="term" value="F:calcium ion binding"/>
    <property type="evidence" value="ECO:0007669"/>
    <property type="project" value="InterPro"/>
</dbReference>
<dbReference type="GO" id="GO:0005179">
    <property type="term" value="F:hormone activity"/>
    <property type="evidence" value="ECO:0000250"/>
    <property type="project" value="UniProtKB"/>
</dbReference>
<dbReference type="GO" id="GO:0046848">
    <property type="term" value="F:hydroxyapatite binding"/>
    <property type="evidence" value="ECO:0007669"/>
    <property type="project" value="TreeGrafter"/>
</dbReference>
<dbReference type="GO" id="GO:0008147">
    <property type="term" value="F:structural constituent of bone"/>
    <property type="evidence" value="ECO:0000250"/>
    <property type="project" value="UniProtKB"/>
</dbReference>
<dbReference type="GO" id="GO:0031214">
    <property type="term" value="P:biomineral tissue development"/>
    <property type="evidence" value="ECO:0007669"/>
    <property type="project" value="UniProtKB-KW"/>
</dbReference>
<dbReference type="GO" id="GO:0060348">
    <property type="term" value="P:bone development"/>
    <property type="evidence" value="ECO:0007669"/>
    <property type="project" value="InterPro"/>
</dbReference>
<dbReference type="GO" id="GO:0032869">
    <property type="term" value="P:cellular response to insulin stimulus"/>
    <property type="evidence" value="ECO:0000250"/>
    <property type="project" value="UniProtKB"/>
</dbReference>
<dbReference type="GO" id="GO:0042593">
    <property type="term" value="P:glucose homeostasis"/>
    <property type="evidence" value="ECO:0000250"/>
    <property type="project" value="UniProtKB"/>
</dbReference>
<dbReference type="GO" id="GO:1903011">
    <property type="term" value="P:negative regulation of bone development"/>
    <property type="evidence" value="ECO:0000250"/>
    <property type="project" value="UniProtKB"/>
</dbReference>
<dbReference type="GO" id="GO:0001649">
    <property type="term" value="P:osteoblast differentiation"/>
    <property type="evidence" value="ECO:0007669"/>
    <property type="project" value="TreeGrafter"/>
</dbReference>
<dbReference type="GO" id="GO:1900076">
    <property type="term" value="P:regulation of cellular response to insulin stimulus"/>
    <property type="evidence" value="ECO:0007669"/>
    <property type="project" value="InterPro"/>
</dbReference>
<dbReference type="GO" id="GO:0032571">
    <property type="term" value="P:response to vitamin K"/>
    <property type="evidence" value="ECO:0007669"/>
    <property type="project" value="InterPro"/>
</dbReference>
<dbReference type="GO" id="GO:0044342">
    <property type="term" value="P:type B pancreatic cell proliferation"/>
    <property type="evidence" value="ECO:0000250"/>
    <property type="project" value="UniProtKB"/>
</dbReference>
<dbReference type="InterPro" id="IPR035972">
    <property type="entry name" value="GLA-like_dom_SF"/>
</dbReference>
<dbReference type="InterPro" id="IPR000294">
    <property type="entry name" value="GLA_domain"/>
</dbReference>
<dbReference type="InterPro" id="IPR039176">
    <property type="entry name" value="Osteocalcin"/>
</dbReference>
<dbReference type="PANTHER" id="PTHR14235">
    <property type="entry name" value="OSTEOCALCIN"/>
    <property type="match status" value="1"/>
</dbReference>
<dbReference type="PANTHER" id="PTHR14235:SF0">
    <property type="entry name" value="OSTEOCALCIN"/>
    <property type="match status" value="1"/>
</dbReference>
<dbReference type="SMART" id="SM00069">
    <property type="entry name" value="GLA"/>
    <property type="match status" value="1"/>
</dbReference>
<dbReference type="SUPFAM" id="SSF57630">
    <property type="entry name" value="GLA-domain"/>
    <property type="match status" value="1"/>
</dbReference>
<dbReference type="PROSITE" id="PS00011">
    <property type="entry name" value="GLA_1"/>
    <property type="match status" value="1"/>
</dbReference>
<dbReference type="PROSITE" id="PS50998">
    <property type="entry name" value="GLA_2"/>
    <property type="match status" value="1"/>
</dbReference>
<evidence type="ECO:0000250" key="1">
    <source>
        <dbReference type="UniProtKB" id="P02820"/>
    </source>
</evidence>
<evidence type="ECO:0000250" key="2">
    <source>
        <dbReference type="UniProtKB" id="P86546"/>
    </source>
</evidence>
<evidence type="ECO:0000250" key="3">
    <source>
        <dbReference type="UniProtKB" id="Q800Y1"/>
    </source>
</evidence>
<evidence type="ECO:0000255" key="4"/>
<evidence type="ECO:0000255" key="5">
    <source>
        <dbReference type="PROSITE-ProRule" id="PRU00463"/>
    </source>
</evidence>
<evidence type="ECO:0000269" key="6">
    <source>
    </source>
</evidence>
<evidence type="ECO:0000269" key="7">
    <source>
    </source>
</evidence>
<evidence type="ECO:0000303" key="8">
    <source>
    </source>
</evidence>
<evidence type="ECO:0000303" key="9">
    <source>
    </source>
</evidence>
<evidence type="ECO:0000305" key="10"/>
<evidence type="ECO:0000305" key="11">
    <source>
    </source>
</evidence>
<evidence type="ECO:0000312" key="12">
    <source>
        <dbReference type="EMBL" id="AAW30003.1"/>
    </source>
</evidence>
<feature type="signal peptide" evidence="4">
    <location>
        <begin position="1"/>
        <end position="21"/>
    </location>
</feature>
<feature type="propeptide" id="PRO_0000436923" evidence="11">
    <location>
        <begin position="22"/>
        <end position="50"/>
    </location>
</feature>
<feature type="chain" id="PRO_5007208183" description="Osteocalcin 1" evidence="10">
    <location>
        <begin position="51"/>
        <end position="95"/>
    </location>
</feature>
<feature type="domain" description="Gla" evidence="5">
    <location>
        <begin position="45"/>
        <end position="91"/>
    </location>
</feature>
<feature type="binding site" evidence="1">
    <location>
        <position position="61"/>
    </location>
    <ligand>
        <name>Ca(2+)</name>
        <dbReference type="ChEBI" id="CHEBI:29108"/>
        <label>3</label>
    </ligand>
</feature>
<feature type="binding site" evidence="1">
    <location>
        <position position="65"/>
    </location>
    <ligand>
        <name>Ca(2+)</name>
        <dbReference type="ChEBI" id="CHEBI:29108"/>
        <label>2</label>
    </ligand>
</feature>
<feature type="binding site" evidence="1">
    <location>
        <position position="68"/>
    </location>
    <ligand>
        <name>Ca(2+)</name>
        <dbReference type="ChEBI" id="CHEBI:29108"/>
        <label>1</label>
    </ligand>
</feature>
<feature type="binding site" evidence="1">
    <location>
        <position position="68"/>
    </location>
    <ligand>
        <name>Ca(2+)</name>
        <dbReference type="ChEBI" id="CHEBI:29108"/>
        <label>2</label>
    </ligand>
</feature>
<feature type="modified residue" description="4-carboxyglutamate" evidence="3">
    <location>
        <position position="61"/>
    </location>
</feature>
<feature type="modified residue" description="4-carboxyglutamate" evidence="5">
    <location>
        <position position="65"/>
    </location>
</feature>
<feature type="modified residue" description="4-carboxyglutamate" evidence="5">
    <location>
        <position position="68"/>
    </location>
</feature>
<feature type="disulfide bond" evidence="5">
    <location>
        <begin position="67"/>
        <end position="73"/>
    </location>
</feature>
<accession>Q1EG28</accession>
<accession>P86865</accession>
<sequence>MKTLSVLVLCSLAVLCLTSDASFSSQPAVDTPAQEGLFVEQEQASSVVRQAPKELSLSQLESLREVCELNLACEDMMDTSGIIAAYTTYYGPIPF</sequence>